<proteinExistence type="inferred from homology"/>
<protein>
    <recommendedName>
        <fullName evidence="1">L-alanine exporter AlaE</fullName>
    </recommendedName>
</protein>
<comment type="function">
    <text evidence="1">Exports L-alanine.</text>
</comment>
<comment type="subcellular location">
    <subcellularLocation>
        <location evidence="1">Cell inner membrane</location>
        <topology evidence="1">Multi-pass membrane protein</topology>
    </subcellularLocation>
</comment>
<comment type="similarity">
    <text evidence="1">Belongs to the AlaE exporter family.</text>
</comment>
<comment type="sequence caution" evidence="2">
    <conflict type="erroneous initiation">
        <sequence resource="EMBL-CDS" id="CAQ87963"/>
    </conflict>
    <text>Extended N-terminus.</text>
</comment>
<reference key="1">
    <citation type="journal article" date="2009" name="PLoS Genet.">
        <title>Organised genome dynamics in the Escherichia coli species results in highly diverse adaptive paths.</title>
        <authorList>
            <person name="Touchon M."/>
            <person name="Hoede C."/>
            <person name="Tenaillon O."/>
            <person name="Barbe V."/>
            <person name="Baeriswyl S."/>
            <person name="Bidet P."/>
            <person name="Bingen E."/>
            <person name="Bonacorsi S."/>
            <person name="Bouchier C."/>
            <person name="Bouvet O."/>
            <person name="Calteau A."/>
            <person name="Chiapello H."/>
            <person name="Clermont O."/>
            <person name="Cruveiller S."/>
            <person name="Danchin A."/>
            <person name="Diard M."/>
            <person name="Dossat C."/>
            <person name="Karoui M.E."/>
            <person name="Frapy E."/>
            <person name="Garry L."/>
            <person name="Ghigo J.M."/>
            <person name="Gilles A.M."/>
            <person name="Johnson J."/>
            <person name="Le Bouguenec C."/>
            <person name="Lescat M."/>
            <person name="Mangenot S."/>
            <person name="Martinez-Jehanne V."/>
            <person name="Matic I."/>
            <person name="Nassif X."/>
            <person name="Oztas S."/>
            <person name="Petit M.A."/>
            <person name="Pichon C."/>
            <person name="Rouy Z."/>
            <person name="Ruf C.S."/>
            <person name="Schneider D."/>
            <person name="Tourret J."/>
            <person name="Vacherie B."/>
            <person name="Vallenet D."/>
            <person name="Medigue C."/>
            <person name="Rocha E.P.C."/>
            <person name="Denamur E."/>
        </authorList>
    </citation>
    <scope>NUCLEOTIDE SEQUENCE [LARGE SCALE GENOMIC DNA]</scope>
    <source>
        <strain>ATCC 35469 / DSM 13698 / BCRC 15582 / CCUG 18766 / IAM 14443 / JCM 21226 / LMG 7866 / NBRC 102419 / NCTC 12128 / CDC 0568-73</strain>
    </source>
</reference>
<sequence>MESHTMLSAQSRWRNAMADTFAMVVYCTVVNMLIEIFLSGMSFEQSLSSRLVAIPVNILIACPYGIYRDFFMRQARKMNNKGWTKTIADILAYVTFQSPVYAAILWVIGADWHQIVAAVSSNMVISMMMGAVYGYFLDYCRRLFKVTSYQQLKA</sequence>
<dbReference type="EMBL" id="CU928158">
    <property type="protein sequence ID" value="CAQ87963.1"/>
    <property type="status" value="ALT_INIT"/>
    <property type="molecule type" value="Genomic_DNA"/>
</dbReference>
<dbReference type="KEGG" id="efe:EFER_0402"/>
<dbReference type="HOGENOM" id="CLU_126493_0_0_6"/>
<dbReference type="Proteomes" id="UP000000745">
    <property type="component" value="Chromosome"/>
</dbReference>
<dbReference type="GO" id="GO:0005886">
    <property type="term" value="C:plasma membrane"/>
    <property type="evidence" value="ECO:0007669"/>
    <property type="project" value="UniProtKB-SubCell"/>
</dbReference>
<dbReference type="GO" id="GO:0034639">
    <property type="term" value="F:L-amino acid efflux transmembrane transporter activity"/>
    <property type="evidence" value="ECO:0007669"/>
    <property type="project" value="UniProtKB-UniRule"/>
</dbReference>
<dbReference type="GO" id="GO:0032973">
    <property type="term" value="P:amino acid export across plasma membrane"/>
    <property type="evidence" value="ECO:0007669"/>
    <property type="project" value="UniProtKB-UniRule"/>
</dbReference>
<dbReference type="HAMAP" id="MF_00914">
    <property type="entry name" value="L_Ala_exporter"/>
    <property type="match status" value="1"/>
</dbReference>
<dbReference type="InterPro" id="IPR010574">
    <property type="entry name" value="Ala_export_AlaE"/>
</dbReference>
<dbReference type="Pfam" id="PF06610">
    <property type="entry name" value="AlaE"/>
    <property type="match status" value="1"/>
</dbReference>
<accession>B7LVR8</accession>
<gene>
    <name evidence="1" type="primary">alaE</name>
    <name type="ordered locus">EFER_0402</name>
</gene>
<name>ALAE_ESCF3</name>
<organism>
    <name type="scientific">Escherichia fergusonii (strain ATCC 35469 / DSM 13698 / CCUG 18766 / IAM 14443 / JCM 21226 / LMG 7866 / NBRC 102419 / NCTC 12128 / CDC 0568-73)</name>
    <dbReference type="NCBI Taxonomy" id="585054"/>
    <lineage>
        <taxon>Bacteria</taxon>
        <taxon>Pseudomonadati</taxon>
        <taxon>Pseudomonadota</taxon>
        <taxon>Gammaproteobacteria</taxon>
        <taxon>Enterobacterales</taxon>
        <taxon>Enterobacteriaceae</taxon>
        <taxon>Escherichia</taxon>
    </lineage>
</organism>
<keyword id="KW-0029">Amino-acid transport</keyword>
<keyword id="KW-0997">Cell inner membrane</keyword>
<keyword id="KW-1003">Cell membrane</keyword>
<keyword id="KW-0472">Membrane</keyword>
<keyword id="KW-0812">Transmembrane</keyword>
<keyword id="KW-1133">Transmembrane helix</keyword>
<keyword id="KW-0813">Transport</keyword>
<feature type="chain" id="PRO_0000415623" description="L-alanine exporter AlaE">
    <location>
        <begin position="1"/>
        <end position="154"/>
    </location>
</feature>
<feature type="transmembrane region" description="Helical" evidence="1">
    <location>
        <begin position="21"/>
        <end position="41"/>
    </location>
</feature>
<feature type="transmembrane region" description="Helical" evidence="1">
    <location>
        <begin position="51"/>
        <end position="71"/>
    </location>
</feature>
<feature type="transmembrane region" description="Helical" evidence="1">
    <location>
        <begin position="90"/>
        <end position="110"/>
    </location>
</feature>
<feature type="transmembrane region" description="Helical" evidence="1">
    <location>
        <begin position="115"/>
        <end position="135"/>
    </location>
</feature>
<evidence type="ECO:0000255" key="1">
    <source>
        <dbReference type="HAMAP-Rule" id="MF_00914"/>
    </source>
</evidence>
<evidence type="ECO:0000305" key="2"/>